<feature type="chain" id="PRO_1000140601" description="Small ribosomal subunit protein uS8">
    <location>
        <begin position="1"/>
        <end position="132"/>
    </location>
</feature>
<sequence>MTMTDPLGDMLTRIRNGASRRKSSVSTPASKLRARVLDVLQSEGYIRGYSVVDFGNGKSELSIELKYYEGASVIREIGRVSKPGRRVYVSVKSIPQVANGLGITILSTPKGVMADHQAREQNVGGEVLCSVF</sequence>
<keyword id="KW-1185">Reference proteome</keyword>
<keyword id="KW-0687">Ribonucleoprotein</keyword>
<keyword id="KW-0689">Ribosomal protein</keyword>
<keyword id="KW-0694">RNA-binding</keyword>
<keyword id="KW-0699">rRNA-binding</keyword>
<organism>
    <name type="scientific">Rhizobium leguminosarum bv. trifolii (strain WSM2304)</name>
    <dbReference type="NCBI Taxonomy" id="395492"/>
    <lineage>
        <taxon>Bacteria</taxon>
        <taxon>Pseudomonadati</taxon>
        <taxon>Pseudomonadota</taxon>
        <taxon>Alphaproteobacteria</taxon>
        <taxon>Hyphomicrobiales</taxon>
        <taxon>Rhizobiaceae</taxon>
        <taxon>Rhizobium/Agrobacterium group</taxon>
        <taxon>Rhizobium</taxon>
    </lineage>
</organism>
<name>RS8_RHILW</name>
<gene>
    <name evidence="1" type="primary">rpsH</name>
    <name type="ordered locus">Rleg2_1346</name>
</gene>
<reference key="1">
    <citation type="journal article" date="2010" name="Stand. Genomic Sci.">
        <title>Complete genome sequence of Rhizobium leguminosarum bv trifolii strain WSM2304, an effective microsymbiont of the South American clover Trifolium polymorphum.</title>
        <authorList>
            <person name="Reeve W."/>
            <person name="O'Hara G."/>
            <person name="Chain P."/>
            <person name="Ardley J."/>
            <person name="Brau L."/>
            <person name="Nandesena K."/>
            <person name="Tiwari R."/>
            <person name="Malfatti S."/>
            <person name="Kiss H."/>
            <person name="Lapidus A."/>
            <person name="Copeland A."/>
            <person name="Nolan M."/>
            <person name="Land M."/>
            <person name="Ivanova N."/>
            <person name="Mavromatis K."/>
            <person name="Markowitz V."/>
            <person name="Kyrpides N."/>
            <person name="Melino V."/>
            <person name="Denton M."/>
            <person name="Yates R."/>
            <person name="Howieson J."/>
        </authorList>
    </citation>
    <scope>NUCLEOTIDE SEQUENCE [LARGE SCALE GENOMIC DNA]</scope>
    <source>
        <strain>WSM2304</strain>
    </source>
</reference>
<protein>
    <recommendedName>
        <fullName evidence="1">Small ribosomal subunit protein uS8</fullName>
    </recommendedName>
    <alternativeName>
        <fullName evidence="2">30S ribosomal protein S8</fullName>
    </alternativeName>
</protein>
<accession>B5ZYU9</accession>
<evidence type="ECO:0000255" key="1">
    <source>
        <dbReference type="HAMAP-Rule" id="MF_01302"/>
    </source>
</evidence>
<evidence type="ECO:0000305" key="2"/>
<comment type="function">
    <text evidence="1">One of the primary rRNA binding proteins, it binds directly to 16S rRNA central domain where it helps coordinate assembly of the platform of the 30S subunit.</text>
</comment>
<comment type="subunit">
    <text evidence="1">Part of the 30S ribosomal subunit. Contacts proteins S5 and S12.</text>
</comment>
<comment type="similarity">
    <text evidence="1">Belongs to the universal ribosomal protein uS8 family.</text>
</comment>
<proteinExistence type="inferred from homology"/>
<dbReference type="EMBL" id="CP001191">
    <property type="protein sequence ID" value="ACI54640.1"/>
    <property type="molecule type" value="Genomic_DNA"/>
</dbReference>
<dbReference type="RefSeq" id="WP_003547562.1">
    <property type="nucleotide sequence ID" value="NC_011369.1"/>
</dbReference>
<dbReference type="SMR" id="B5ZYU9"/>
<dbReference type="STRING" id="395492.Rleg2_1346"/>
<dbReference type="GeneID" id="75219573"/>
<dbReference type="KEGG" id="rlt:Rleg2_1346"/>
<dbReference type="eggNOG" id="COG0096">
    <property type="taxonomic scope" value="Bacteria"/>
</dbReference>
<dbReference type="HOGENOM" id="CLU_098428_0_0_5"/>
<dbReference type="Proteomes" id="UP000008330">
    <property type="component" value="Chromosome"/>
</dbReference>
<dbReference type="GO" id="GO:1990904">
    <property type="term" value="C:ribonucleoprotein complex"/>
    <property type="evidence" value="ECO:0007669"/>
    <property type="project" value="UniProtKB-KW"/>
</dbReference>
<dbReference type="GO" id="GO:0005840">
    <property type="term" value="C:ribosome"/>
    <property type="evidence" value="ECO:0007669"/>
    <property type="project" value="UniProtKB-KW"/>
</dbReference>
<dbReference type="GO" id="GO:0019843">
    <property type="term" value="F:rRNA binding"/>
    <property type="evidence" value="ECO:0007669"/>
    <property type="project" value="UniProtKB-UniRule"/>
</dbReference>
<dbReference type="GO" id="GO:0003735">
    <property type="term" value="F:structural constituent of ribosome"/>
    <property type="evidence" value="ECO:0007669"/>
    <property type="project" value="InterPro"/>
</dbReference>
<dbReference type="GO" id="GO:0006412">
    <property type="term" value="P:translation"/>
    <property type="evidence" value="ECO:0007669"/>
    <property type="project" value="UniProtKB-UniRule"/>
</dbReference>
<dbReference type="FunFam" id="3.30.1370.30:FF:000002">
    <property type="entry name" value="30S ribosomal protein S8"/>
    <property type="match status" value="1"/>
</dbReference>
<dbReference type="FunFam" id="3.30.1490.10:FF:000001">
    <property type="entry name" value="30S ribosomal protein S8"/>
    <property type="match status" value="1"/>
</dbReference>
<dbReference type="Gene3D" id="3.30.1370.30">
    <property type="match status" value="1"/>
</dbReference>
<dbReference type="Gene3D" id="3.30.1490.10">
    <property type="match status" value="1"/>
</dbReference>
<dbReference type="HAMAP" id="MF_01302_B">
    <property type="entry name" value="Ribosomal_uS8_B"/>
    <property type="match status" value="1"/>
</dbReference>
<dbReference type="InterPro" id="IPR000630">
    <property type="entry name" value="Ribosomal_uS8"/>
</dbReference>
<dbReference type="InterPro" id="IPR047863">
    <property type="entry name" value="Ribosomal_uS8_CS"/>
</dbReference>
<dbReference type="InterPro" id="IPR035987">
    <property type="entry name" value="Ribosomal_uS8_sf"/>
</dbReference>
<dbReference type="NCBIfam" id="NF001109">
    <property type="entry name" value="PRK00136.1"/>
    <property type="match status" value="1"/>
</dbReference>
<dbReference type="PANTHER" id="PTHR11758">
    <property type="entry name" value="40S RIBOSOMAL PROTEIN S15A"/>
    <property type="match status" value="1"/>
</dbReference>
<dbReference type="Pfam" id="PF00410">
    <property type="entry name" value="Ribosomal_S8"/>
    <property type="match status" value="1"/>
</dbReference>
<dbReference type="SUPFAM" id="SSF56047">
    <property type="entry name" value="Ribosomal protein S8"/>
    <property type="match status" value="1"/>
</dbReference>
<dbReference type="PROSITE" id="PS00053">
    <property type="entry name" value="RIBOSOMAL_S8"/>
    <property type="match status" value="1"/>
</dbReference>